<protein>
    <recommendedName>
        <fullName>5-hydroxytryptamine receptor 1</fullName>
        <shortName>5-HT receptor</shortName>
    </recommendedName>
    <alternativeName>
        <fullName>5HT-dro</fullName>
    </alternativeName>
    <alternativeName>
        <fullName>Serotonin receptor 1</fullName>
    </alternativeName>
</protein>
<evidence type="ECO:0000250" key="1"/>
<evidence type="ECO:0000250" key="2">
    <source>
        <dbReference type="UniProtKB" id="P28222"/>
    </source>
</evidence>
<evidence type="ECO:0000255" key="3"/>
<evidence type="ECO:0000255" key="4">
    <source>
        <dbReference type="PROSITE-ProRule" id="PRU00521"/>
    </source>
</evidence>
<evidence type="ECO:0000256" key="5">
    <source>
        <dbReference type="SAM" id="MobiDB-lite"/>
    </source>
</evidence>
<evidence type="ECO:0000269" key="6">
    <source>
    </source>
</evidence>
<dbReference type="EMBL" id="M55533">
    <property type="protein sequence ID" value="AAA28305.1"/>
    <property type="molecule type" value="mRNA"/>
</dbReference>
<dbReference type="EMBL" id="AE014297">
    <property type="protein sequence ID" value="AAF57104.1"/>
    <property type="molecule type" value="Genomic_DNA"/>
</dbReference>
<dbReference type="EMBL" id="AY118491">
    <property type="protein sequence ID" value="AAM49860.1"/>
    <property type="molecule type" value="mRNA"/>
</dbReference>
<dbReference type="PIR" id="A38271">
    <property type="entry name" value="A38271"/>
</dbReference>
<dbReference type="RefSeq" id="NP_001263131.1">
    <property type="nucleotide sequence ID" value="NM_001276202.1"/>
</dbReference>
<dbReference type="RefSeq" id="NP_524599.1">
    <property type="nucleotide sequence ID" value="NM_079860.3"/>
</dbReference>
<dbReference type="SMR" id="P20905"/>
<dbReference type="FunCoup" id="P20905">
    <property type="interactions" value="105"/>
</dbReference>
<dbReference type="IntAct" id="P20905">
    <property type="interactions" value="2"/>
</dbReference>
<dbReference type="STRING" id="7227.FBpp0306575"/>
<dbReference type="PaxDb" id="7227-FBpp0085108"/>
<dbReference type="DNASU" id="43669"/>
<dbReference type="EnsemblMetazoa" id="FBtr0085746">
    <property type="protein sequence ID" value="FBpp0085108"/>
    <property type="gene ID" value="FBgn0004573"/>
</dbReference>
<dbReference type="EnsemblMetazoa" id="FBtr0334508">
    <property type="protein sequence ID" value="FBpp0306575"/>
    <property type="gene ID" value="FBgn0004573"/>
</dbReference>
<dbReference type="GeneID" id="43669"/>
<dbReference type="KEGG" id="dme:Dmel_CG12073"/>
<dbReference type="AGR" id="FB:FBgn0004573"/>
<dbReference type="CTD" id="43669"/>
<dbReference type="FlyBase" id="FBgn0004573">
    <property type="gene designation" value="5-HT7"/>
</dbReference>
<dbReference type="VEuPathDB" id="VectorBase:FBgn0004573"/>
<dbReference type="eggNOG" id="KOG3656">
    <property type="taxonomic scope" value="Eukaryota"/>
</dbReference>
<dbReference type="GeneTree" id="ENSGT01010000222287"/>
<dbReference type="HOGENOM" id="CLU_009579_11_4_1"/>
<dbReference type="InParanoid" id="P20905"/>
<dbReference type="OMA" id="FMKDDHR"/>
<dbReference type="OrthoDB" id="5951059at2759"/>
<dbReference type="PhylomeDB" id="P20905"/>
<dbReference type="Reactome" id="R-DME-390666">
    <property type="pathway name" value="Serotonin receptors"/>
</dbReference>
<dbReference type="Reactome" id="R-DME-418555">
    <property type="pathway name" value="G alpha (s) signalling events"/>
</dbReference>
<dbReference type="Reactome" id="R-DME-9706019">
    <property type="pathway name" value="RHOBTB3 ATPase cycle"/>
</dbReference>
<dbReference type="BioGRID-ORCS" id="43669">
    <property type="hits" value="0 hits in 3 CRISPR screens"/>
</dbReference>
<dbReference type="ChiTaRS" id="5-HT7">
    <property type="organism name" value="fly"/>
</dbReference>
<dbReference type="GenomeRNAi" id="43669"/>
<dbReference type="PRO" id="PR:P20905"/>
<dbReference type="Proteomes" id="UP000000803">
    <property type="component" value="Chromosome 3R"/>
</dbReference>
<dbReference type="Bgee" id="FBgn0004573">
    <property type="expression patterns" value="Expressed in adult astrocyte-like glial cell in post-embryonic organism and 79 other cell types or tissues"/>
</dbReference>
<dbReference type="ExpressionAtlas" id="P20905">
    <property type="expression patterns" value="baseline and differential"/>
</dbReference>
<dbReference type="GO" id="GO:0030425">
    <property type="term" value="C:dendrite"/>
    <property type="evidence" value="ECO:0000318"/>
    <property type="project" value="GO_Central"/>
</dbReference>
<dbReference type="GO" id="GO:0016020">
    <property type="term" value="C:membrane"/>
    <property type="evidence" value="ECO:0000250"/>
    <property type="project" value="FlyBase"/>
</dbReference>
<dbReference type="GO" id="GO:0005886">
    <property type="term" value="C:plasma membrane"/>
    <property type="evidence" value="ECO:0000318"/>
    <property type="project" value="GO_Central"/>
</dbReference>
<dbReference type="GO" id="GO:0045202">
    <property type="term" value="C:synapse"/>
    <property type="evidence" value="ECO:0007669"/>
    <property type="project" value="GOC"/>
</dbReference>
<dbReference type="GO" id="GO:0008227">
    <property type="term" value="F:G protein-coupled amine receptor activity"/>
    <property type="evidence" value="ECO:0000250"/>
    <property type="project" value="FlyBase"/>
</dbReference>
<dbReference type="GO" id="GO:0004993">
    <property type="term" value="F:G protein-coupled serotonin receptor activity"/>
    <property type="evidence" value="ECO:0000314"/>
    <property type="project" value="FlyBase"/>
</dbReference>
<dbReference type="GO" id="GO:0030594">
    <property type="term" value="F:neurotransmitter receptor activity"/>
    <property type="evidence" value="ECO:0000318"/>
    <property type="project" value="GO_Central"/>
</dbReference>
<dbReference type="GO" id="GO:0007192">
    <property type="term" value="P:adenylate cyclase-activating serotonin receptor signaling pathway"/>
    <property type="evidence" value="ECO:0000304"/>
    <property type="project" value="FlyBase"/>
</dbReference>
<dbReference type="GO" id="GO:0007268">
    <property type="term" value="P:chemical synaptic transmission"/>
    <property type="evidence" value="ECO:0000318"/>
    <property type="project" value="GO_Central"/>
</dbReference>
<dbReference type="GO" id="GO:0007619">
    <property type="term" value="P:courtship behavior"/>
    <property type="evidence" value="ECO:0000315"/>
    <property type="project" value="FlyBase"/>
</dbReference>
<dbReference type="GO" id="GO:0060180">
    <property type="term" value="P:female mating behavior"/>
    <property type="evidence" value="ECO:0000315"/>
    <property type="project" value="FlyBase"/>
</dbReference>
<dbReference type="GO" id="GO:0007187">
    <property type="term" value="P:G protein-coupled receptor signaling pathway, coupled to cyclic nucleotide second messenger"/>
    <property type="evidence" value="ECO:0000318"/>
    <property type="project" value="GO_Central"/>
</dbReference>
<dbReference type="GO" id="GO:0016543">
    <property type="term" value="P:male courtship behavior, orientation prior to leg tapping and wing vibration"/>
    <property type="evidence" value="ECO:0000315"/>
    <property type="project" value="FlyBase"/>
</dbReference>
<dbReference type="GO" id="GO:0016546">
    <property type="term" value="P:male courtship behavior, proboscis-mediated licking"/>
    <property type="evidence" value="ECO:0000315"/>
    <property type="project" value="FlyBase"/>
</dbReference>
<dbReference type="GO" id="GO:0016545">
    <property type="term" value="P:male courtship behavior, veined wing vibration"/>
    <property type="evidence" value="ECO:0000315"/>
    <property type="project" value="FlyBase"/>
</dbReference>
<dbReference type="GO" id="GO:0060179">
    <property type="term" value="P:male mating behavior"/>
    <property type="evidence" value="ECO:0000315"/>
    <property type="project" value="FlyBase"/>
</dbReference>
<dbReference type="GO" id="GO:0007210">
    <property type="term" value="P:serotonin receptor signaling pathway"/>
    <property type="evidence" value="ECO:0000314"/>
    <property type="project" value="FlyBase"/>
</dbReference>
<dbReference type="CDD" id="cd15329">
    <property type="entry name" value="7tmA_5-HT7"/>
    <property type="match status" value="1"/>
</dbReference>
<dbReference type="FunFam" id="1.20.1070.10:FF:000523">
    <property type="entry name" value="5-hydroxytryptamine receptor 2B"/>
    <property type="match status" value="1"/>
</dbReference>
<dbReference type="Gene3D" id="1.20.1070.10">
    <property type="entry name" value="Rhodopsin 7-helix transmembrane proteins"/>
    <property type="match status" value="1"/>
</dbReference>
<dbReference type="InterPro" id="IPR000929">
    <property type="entry name" value="Dopamine_rcpt"/>
</dbReference>
<dbReference type="InterPro" id="IPR000276">
    <property type="entry name" value="GPCR_Rhodpsn"/>
</dbReference>
<dbReference type="InterPro" id="IPR017452">
    <property type="entry name" value="GPCR_Rhodpsn_7TM"/>
</dbReference>
<dbReference type="PANTHER" id="PTHR24248">
    <property type="entry name" value="ADRENERGIC RECEPTOR-RELATED G-PROTEIN COUPLED RECEPTOR"/>
    <property type="match status" value="1"/>
</dbReference>
<dbReference type="PANTHER" id="PTHR24248:SF199">
    <property type="entry name" value="IP13425P-RELATED"/>
    <property type="match status" value="1"/>
</dbReference>
<dbReference type="Pfam" id="PF00001">
    <property type="entry name" value="7tm_1"/>
    <property type="match status" value="1"/>
</dbReference>
<dbReference type="PRINTS" id="PR00242">
    <property type="entry name" value="DOPAMINER"/>
</dbReference>
<dbReference type="PRINTS" id="PR00237">
    <property type="entry name" value="GPCRRHODOPSN"/>
</dbReference>
<dbReference type="SMART" id="SM01381">
    <property type="entry name" value="7TM_GPCR_Srsx"/>
    <property type="match status" value="1"/>
</dbReference>
<dbReference type="SUPFAM" id="SSF81321">
    <property type="entry name" value="Family A G protein-coupled receptor-like"/>
    <property type="match status" value="1"/>
</dbReference>
<dbReference type="PROSITE" id="PS00237">
    <property type="entry name" value="G_PROTEIN_RECEP_F1_1"/>
    <property type="match status" value="1"/>
</dbReference>
<dbReference type="PROSITE" id="PS50262">
    <property type="entry name" value="G_PROTEIN_RECEP_F1_2"/>
    <property type="match status" value="1"/>
</dbReference>
<keyword id="KW-1003">Cell membrane</keyword>
<keyword id="KW-1015">Disulfide bond</keyword>
<keyword id="KW-0297">G-protein coupled receptor</keyword>
<keyword id="KW-0472">Membrane</keyword>
<keyword id="KW-0675">Receptor</keyword>
<keyword id="KW-1185">Reference proteome</keyword>
<keyword id="KW-0677">Repeat</keyword>
<keyword id="KW-0807">Transducer</keyword>
<keyword id="KW-0812">Transmembrane</keyword>
<keyword id="KW-1133">Transmembrane helix</keyword>
<reference key="1">
    <citation type="journal article" date="1990" name="Proc. Natl. Acad. Sci. U.S.A.">
        <title>Cloning and characterization of a Drosophila serotonin receptor that activates adenylate cyclase.</title>
        <authorList>
            <person name="Witz P."/>
            <person name="Amlaiky N."/>
            <person name="Plassat J.-L."/>
            <person name="Maroteaux L."/>
            <person name="Borrelli E."/>
            <person name="Hen R."/>
        </authorList>
    </citation>
    <scope>NUCLEOTIDE SEQUENCE [MRNA]</scope>
    <scope>FUNCTION</scope>
    <scope>SUBCELLULAR LOCATION</scope>
    <scope>TISSUE SPECIFICITY</scope>
    <source>
        <strain>Oregon-R</strain>
        <tissue>Head</tissue>
    </source>
</reference>
<reference key="2">
    <citation type="journal article" date="2000" name="Science">
        <title>The genome sequence of Drosophila melanogaster.</title>
        <authorList>
            <person name="Adams M.D."/>
            <person name="Celniker S.E."/>
            <person name="Holt R.A."/>
            <person name="Evans C.A."/>
            <person name="Gocayne J.D."/>
            <person name="Amanatides P.G."/>
            <person name="Scherer S.E."/>
            <person name="Li P.W."/>
            <person name="Hoskins R.A."/>
            <person name="Galle R.F."/>
            <person name="George R.A."/>
            <person name="Lewis S.E."/>
            <person name="Richards S."/>
            <person name="Ashburner M."/>
            <person name="Henderson S.N."/>
            <person name="Sutton G.G."/>
            <person name="Wortman J.R."/>
            <person name="Yandell M.D."/>
            <person name="Zhang Q."/>
            <person name="Chen L.X."/>
            <person name="Brandon R.C."/>
            <person name="Rogers Y.-H.C."/>
            <person name="Blazej R.G."/>
            <person name="Champe M."/>
            <person name="Pfeiffer B.D."/>
            <person name="Wan K.H."/>
            <person name="Doyle C."/>
            <person name="Baxter E.G."/>
            <person name="Helt G."/>
            <person name="Nelson C.R."/>
            <person name="Miklos G.L.G."/>
            <person name="Abril J.F."/>
            <person name="Agbayani A."/>
            <person name="An H.-J."/>
            <person name="Andrews-Pfannkoch C."/>
            <person name="Baldwin D."/>
            <person name="Ballew R.M."/>
            <person name="Basu A."/>
            <person name="Baxendale J."/>
            <person name="Bayraktaroglu L."/>
            <person name="Beasley E.M."/>
            <person name="Beeson K.Y."/>
            <person name="Benos P.V."/>
            <person name="Berman B.P."/>
            <person name="Bhandari D."/>
            <person name="Bolshakov S."/>
            <person name="Borkova D."/>
            <person name="Botchan M.R."/>
            <person name="Bouck J."/>
            <person name="Brokstein P."/>
            <person name="Brottier P."/>
            <person name="Burtis K.C."/>
            <person name="Busam D.A."/>
            <person name="Butler H."/>
            <person name="Cadieu E."/>
            <person name="Center A."/>
            <person name="Chandra I."/>
            <person name="Cherry J.M."/>
            <person name="Cawley S."/>
            <person name="Dahlke C."/>
            <person name="Davenport L.B."/>
            <person name="Davies P."/>
            <person name="de Pablos B."/>
            <person name="Delcher A."/>
            <person name="Deng Z."/>
            <person name="Mays A.D."/>
            <person name="Dew I."/>
            <person name="Dietz S.M."/>
            <person name="Dodson K."/>
            <person name="Doup L.E."/>
            <person name="Downes M."/>
            <person name="Dugan-Rocha S."/>
            <person name="Dunkov B.C."/>
            <person name="Dunn P."/>
            <person name="Durbin K.J."/>
            <person name="Evangelista C.C."/>
            <person name="Ferraz C."/>
            <person name="Ferriera S."/>
            <person name="Fleischmann W."/>
            <person name="Fosler C."/>
            <person name="Gabrielian A.E."/>
            <person name="Garg N.S."/>
            <person name="Gelbart W.M."/>
            <person name="Glasser K."/>
            <person name="Glodek A."/>
            <person name="Gong F."/>
            <person name="Gorrell J.H."/>
            <person name="Gu Z."/>
            <person name="Guan P."/>
            <person name="Harris M."/>
            <person name="Harris N.L."/>
            <person name="Harvey D.A."/>
            <person name="Heiman T.J."/>
            <person name="Hernandez J.R."/>
            <person name="Houck J."/>
            <person name="Hostin D."/>
            <person name="Houston K.A."/>
            <person name="Howland T.J."/>
            <person name="Wei M.-H."/>
            <person name="Ibegwam C."/>
            <person name="Jalali M."/>
            <person name="Kalush F."/>
            <person name="Karpen G.H."/>
            <person name="Ke Z."/>
            <person name="Kennison J.A."/>
            <person name="Ketchum K.A."/>
            <person name="Kimmel B.E."/>
            <person name="Kodira C.D."/>
            <person name="Kraft C.L."/>
            <person name="Kravitz S."/>
            <person name="Kulp D."/>
            <person name="Lai Z."/>
            <person name="Lasko P."/>
            <person name="Lei Y."/>
            <person name="Levitsky A.A."/>
            <person name="Li J.H."/>
            <person name="Li Z."/>
            <person name="Liang Y."/>
            <person name="Lin X."/>
            <person name="Liu X."/>
            <person name="Mattei B."/>
            <person name="McIntosh T.C."/>
            <person name="McLeod M.P."/>
            <person name="McPherson D."/>
            <person name="Merkulov G."/>
            <person name="Milshina N.V."/>
            <person name="Mobarry C."/>
            <person name="Morris J."/>
            <person name="Moshrefi A."/>
            <person name="Mount S.M."/>
            <person name="Moy M."/>
            <person name="Murphy B."/>
            <person name="Murphy L."/>
            <person name="Muzny D.M."/>
            <person name="Nelson D.L."/>
            <person name="Nelson D.R."/>
            <person name="Nelson K.A."/>
            <person name="Nixon K."/>
            <person name="Nusskern D.R."/>
            <person name="Pacleb J.M."/>
            <person name="Palazzolo M."/>
            <person name="Pittman G.S."/>
            <person name="Pan S."/>
            <person name="Pollard J."/>
            <person name="Puri V."/>
            <person name="Reese M.G."/>
            <person name="Reinert K."/>
            <person name="Remington K."/>
            <person name="Saunders R.D.C."/>
            <person name="Scheeler F."/>
            <person name="Shen H."/>
            <person name="Shue B.C."/>
            <person name="Siden-Kiamos I."/>
            <person name="Simpson M."/>
            <person name="Skupski M.P."/>
            <person name="Smith T.J."/>
            <person name="Spier E."/>
            <person name="Spradling A.C."/>
            <person name="Stapleton M."/>
            <person name="Strong R."/>
            <person name="Sun E."/>
            <person name="Svirskas R."/>
            <person name="Tector C."/>
            <person name="Turner R."/>
            <person name="Venter E."/>
            <person name="Wang A.H."/>
            <person name="Wang X."/>
            <person name="Wang Z.-Y."/>
            <person name="Wassarman D.A."/>
            <person name="Weinstock G.M."/>
            <person name="Weissenbach J."/>
            <person name="Williams S.M."/>
            <person name="Woodage T."/>
            <person name="Worley K.C."/>
            <person name="Wu D."/>
            <person name="Yang S."/>
            <person name="Yao Q.A."/>
            <person name="Ye J."/>
            <person name="Yeh R.-F."/>
            <person name="Zaveri J.S."/>
            <person name="Zhan M."/>
            <person name="Zhang G."/>
            <person name="Zhao Q."/>
            <person name="Zheng L."/>
            <person name="Zheng X.H."/>
            <person name="Zhong F.N."/>
            <person name="Zhong W."/>
            <person name="Zhou X."/>
            <person name="Zhu S.C."/>
            <person name="Zhu X."/>
            <person name="Smith H.O."/>
            <person name="Gibbs R.A."/>
            <person name="Myers E.W."/>
            <person name="Rubin G.M."/>
            <person name="Venter J.C."/>
        </authorList>
    </citation>
    <scope>NUCLEOTIDE SEQUENCE [LARGE SCALE GENOMIC DNA]</scope>
    <source>
        <strain>Berkeley</strain>
    </source>
</reference>
<reference key="3">
    <citation type="journal article" date="2002" name="Genome Biol.">
        <title>Annotation of the Drosophila melanogaster euchromatic genome: a systematic review.</title>
        <authorList>
            <person name="Misra S."/>
            <person name="Crosby M.A."/>
            <person name="Mungall C.J."/>
            <person name="Matthews B.B."/>
            <person name="Campbell K.S."/>
            <person name="Hradecky P."/>
            <person name="Huang Y."/>
            <person name="Kaminker J.S."/>
            <person name="Millburn G.H."/>
            <person name="Prochnik S.E."/>
            <person name="Smith C.D."/>
            <person name="Tupy J.L."/>
            <person name="Whitfield E.J."/>
            <person name="Bayraktaroglu L."/>
            <person name="Berman B.P."/>
            <person name="Bettencourt B.R."/>
            <person name="Celniker S.E."/>
            <person name="de Grey A.D.N.J."/>
            <person name="Drysdale R.A."/>
            <person name="Harris N.L."/>
            <person name="Richter J."/>
            <person name="Russo S."/>
            <person name="Schroeder A.J."/>
            <person name="Shu S.Q."/>
            <person name="Stapleton M."/>
            <person name="Yamada C."/>
            <person name="Ashburner M."/>
            <person name="Gelbart W.M."/>
            <person name="Rubin G.M."/>
            <person name="Lewis S.E."/>
        </authorList>
    </citation>
    <scope>GENOME REANNOTATION</scope>
    <source>
        <strain>Berkeley</strain>
    </source>
</reference>
<reference key="4">
    <citation type="submission" date="2002-06" db="EMBL/GenBank/DDBJ databases">
        <authorList>
            <person name="Stapleton M."/>
            <person name="Brokstein P."/>
            <person name="Hong L."/>
            <person name="Agbayani A."/>
            <person name="Carlson J.W."/>
            <person name="Champe M."/>
            <person name="Chavez C."/>
            <person name="Dorsett V."/>
            <person name="Dresnek D."/>
            <person name="Farfan D."/>
            <person name="Frise E."/>
            <person name="George R.A."/>
            <person name="Gonzalez M."/>
            <person name="Guarin H."/>
            <person name="Kronmiller B."/>
            <person name="Li P.W."/>
            <person name="Liao G."/>
            <person name="Miranda A."/>
            <person name="Mungall C.J."/>
            <person name="Nunoo J."/>
            <person name="Pacleb J.M."/>
            <person name="Paragas V."/>
            <person name="Park S."/>
            <person name="Patel S."/>
            <person name="Phouanenavong S."/>
            <person name="Wan K.H."/>
            <person name="Yu C."/>
            <person name="Lewis S.E."/>
            <person name="Rubin G.M."/>
            <person name="Celniker S.E."/>
        </authorList>
    </citation>
    <scope>NUCLEOTIDE SEQUENCE [LARGE SCALE MRNA]</scope>
    <source>
        <strain>Berkeley</strain>
        <tissue>Embryo</tissue>
    </source>
</reference>
<feature type="chain" id="PRO_0000068941" description="5-hydroxytryptamine receptor 1">
    <location>
        <begin position="1"/>
        <end position="564"/>
    </location>
</feature>
<feature type="transmembrane region" description="Helical; Name=0" evidence="3">
    <location>
        <begin position="29"/>
        <end position="51"/>
    </location>
</feature>
<feature type="transmembrane region" description="Helical; Name=1" evidence="3">
    <location>
        <begin position="165"/>
        <end position="188"/>
    </location>
</feature>
<feature type="topological domain" description="Cytoplasmic" evidence="1">
    <location>
        <begin position="189"/>
        <end position="198"/>
    </location>
</feature>
<feature type="transmembrane region" description="Helical; Name=2" evidence="1">
    <location>
        <begin position="199"/>
        <end position="222"/>
    </location>
</feature>
<feature type="topological domain" description="Extracellular" evidence="1">
    <location>
        <begin position="223"/>
        <end position="236"/>
    </location>
</feature>
<feature type="transmembrane region" description="Helical; Name=3" evidence="1">
    <location>
        <begin position="237"/>
        <end position="258"/>
    </location>
</feature>
<feature type="topological domain" description="Cytoplasmic" evidence="1">
    <location>
        <begin position="259"/>
        <end position="278"/>
    </location>
</feature>
<feature type="transmembrane region" description="Helical; Name=4" evidence="1">
    <location>
        <begin position="279"/>
        <end position="302"/>
    </location>
</feature>
<feature type="topological domain" description="Extracellular" evidence="1">
    <location>
        <begin position="303"/>
        <end position="330"/>
    </location>
</feature>
<feature type="transmembrane region" description="Helical; Name=5" evidence="1">
    <location>
        <begin position="331"/>
        <end position="353"/>
    </location>
</feature>
<feature type="topological domain" description="Cytoplasmic" evidence="1">
    <location>
        <begin position="354"/>
        <end position="454"/>
    </location>
</feature>
<feature type="transmembrane region" description="Helical; Name=6" evidence="1">
    <location>
        <begin position="455"/>
        <end position="476"/>
    </location>
</feature>
<feature type="topological domain" description="Extracellular" evidence="1">
    <location>
        <begin position="477"/>
        <end position="487"/>
    </location>
</feature>
<feature type="transmembrane region" description="Helical; Name=7" evidence="1">
    <location>
        <begin position="488"/>
        <end position="510"/>
    </location>
</feature>
<feature type="topological domain" description="Cytoplasmic" evidence="1">
    <location>
        <begin position="511"/>
        <end position="564"/>
    </location>
</feature>
<feature type="repeat" description="1">
    <location>
        <begin position="89"/>
        <end position="90"/>
    </location>
</feature>
<feature type="repeat" description="2">
    <location>
        <begin position="91"/>
        <end position="92"/>
    </location>
</feature>
<feature type="repeat" description="3">
    <location>
        <begin position="93"/>
        <end position="94"/>
    </location>
</feature>
<feature type="repeat" description="4">
    <location>
        <begin position="95"/>
        <end position="96"/>
    </location>
</feature>
<feature type="repeat" description="5">
    <location>
        <begin position="97"/>
        <end position="98"/>
    </location>
</feature>
<feature type="repeat" description="6">
    <location>
        <begin position="99"/>
        <end position="100"/>
    </location>
</feature>
<feature type="repeat" description="7">
    <location>
        <begin position="101"/>
        <end position="102"/>
    </location>
</feature>
<feature type="repeat" description="8">
    <location>
        <begin position="103"/>
        <end position="104"/>
    </location>
</feature>
<feature type="repeat" description="9">
    <location>
        <begin position="105"/>
        <end position="106"/>
    </location>
</feature>
<feature type="region of interest" description="Disordered" evidence="5">
    <location>
        <begin position="1"/>
        <end position="26"/>
    </location>
</feature>
<feature type="region of interest" description="9 X 2 AA tandem repeats of G-S">
    <location>
        <begin position="89"/>
        <end position="106"/>
    </location>
</feature>
<feature type="region of interest" description="Agonist binding" evidence="1">
    <location>
        <begin position="238"/>
        <end position="247"/>
    </location>
</feature>
<feature type="region of interest" description="Disordered" evidence="5">
    <location>
        <begin position="367"/>
        <end position="396"/>
    </location>
</feature>
<feature type="short sequence motif" description="DRY motif; important for ligand-induced conformation changes" evidence="1">
    <location>
        <begin position="259"/>
        <end position="261"/>
    </location>
</feature>
<feature type="short sequence motif" description="NPxxY motif; important for ligand-induced conformation changes and signaling" evidence="1">
    <location>
        <begin position="503"/>
        <end position="507"/>
    </location>
</feature>
<feature type="compositionally biased region" description="Basic residues" evidence="5">
    <location>
        <begin position="11"/>
        <end position="23"/>
    </location>
</feature>
<feature type="compositionally biased region" description="Polar residues" evidence="5">
    <location>
        <begin position="386"/>
        <end position="396"/>
    </location>
</feature>
<feature type="binding site" evidence="2">
    <location>
        <position position="242"/>
    </location>
    <ligand>
        <name>ergotamine</name>
        <dbReference type="ChEBI" id="CHEBI:190463"/>
        <note>agonist</note>
    </ligand>
</feature>
<feature type="binding site" evidence="2">
    <location>
        <position position="247"/>
    </location>
    <ligand>
        <name>ergotamine</name>
        <dbReference type="ChEBI" id="CHEBI:190463"/>
        <note>agonist</note>
    </ligand>
</feature>
<feature type="disulfide bond" evidence="4">
    <location>
        <begin position="235"/>
        <end position="314"/>
    </location>
</feature>
<organism>
    <name type="scientific">Drosophila melanogaster</name>
    <name type="common">Fruit fly</name>
    <dbReference type="NCBI Taxonomy" id="7227"/>
    <lineage>
        <taxon>Eukaryota</taxon>
        <taxon>Metazoa</taxon>
        <taxon>Ecdysozoa</taxon>
        <taxon>Arthropoda</taxon>
        <taxon>Hexapoda</taxon>
        <taxon>Insecta</taxon>
        <taxon>Pterygota</taxon>
        <taxon>Neoptera</taxon>
        <taxon>Endopterygota</taxon>
        <taxon>Diptera</taxon>
        <taxon>Brachycera</taxon>
        <taxon>Muscomorpha</taxon>
        <taxon>Ephydroidea</taxon>
        <taxon>Drosophilidae</taxon>
        <taxon>Drosophila</taxon>
        <taxon>Sophophora</taxon>
    </lineage>
</organism>
<comment type="function">
    <text evidence="6">G-protein coupled receptor for 5-hydroxytryptamine (serotonin). Also functions as a receptor for various alkaloids. Ligand binding causes a conformation change that triggers signaling via guanine nucleotide-binding proteins (G proteins) and modulates the activity of down-stream effectors, such as adenylate cyclase. Signaling activates adenylate cyclase activity.</text>
</comment>
<comment type="subcellular location">
    <subcellularLocation>
        <location evidence="6">Cell membrane</location>
        <topology evidence="6">Multi-pass membrane protein</topology>
    </subcellularLocation>
</comment>
<comment type="tissue specificity">
    <text evidence="6">Expressed predominantly in adult heads.</text>
</comment>
<comment type="similarity">
    <text evidence="4">Belongs to the G-protein coupled receptor 1 family. 5-hydroxytryptamine receptor subfamily.</text>
</comment>
<proteinExistence type="evidence at transcript level"/>
<sequence length="564" mass="60861">MALSGQDWRRHQSHRQHRNHRTQGNHQKLISTATLTLFVLFLSSWIAYAAGKATVPAPLVEGETESATSQDFNSSSAFLGAIASASSTGSGSGSGSGSGSGSGSGSYGLASMNSSPIAIVSYQGITSSNLGDSNTTLVPLSDTPLLLEEFAAGEFVLPPLTSIFVSIVLLIVILGTVVGNVLVCIAVCMVRKLRRPCNYLLVSLALSDLCVALLVMPMALLYEVLEKWNFGPLLCDIWVSFDVLCCTASILNLCAISVDRYLAITKPLEYGVKRTPRRMMLCVGIVWLAAACISLPPLLILGNEHEDEEGQPICTVCQNFAYQIYATLGSFYIPLSVMLFVYYQIFRAARRIVLEEKRAQTHLQQALNGTGSPSAPQAPPLGHTELASSGNGQRHSSVGNTSLTYSTCGGLSSGGGALAGHGSGGGVSGSTGLLGSPHHKKLRFQLAKEKKASTTLGIIMSAFTVCWLPFFILALIRPFETMHVPASLSSLFLWLGYANSLLNPIIYATLNRDFRKPFQEILYFRCSSLNTMMRENYYQDQYGEPPSQRVMLGDERHGARESFL</sequence>
<accession>P20905</accession>
<accession>Q9VA21</accession>
<name>5HT1R_DROME</name>
<gene>
    <name type="primary">5-HT7</name>
    <name type="synonym">5HT-R1</name>
    <name type="ORF">CG12073</name>
</gene>